<gene>
    <name evidence="1" type="primary">acpP</name>
    <name type="ordered locus">SMGWSS_016</name>
</gene>
<keyword id="KW-0963">Cytoplasm</keyword>
<keyword id="KW-0275">Fatty acid biosynthesis</keyword>
<keyword id="KW-0276">Fatty acid metabolism</keyword>
<keyword id="KW-0444">Lipid biosynthesis</keyword>
<keyword id="KW-0443">Lipid metabolism</keyword>
<keyword id="KW-0596">Phosphopantetheine</keyword>
<keyword id="KW-0597">Phosphoprotein</keyword>
<comment type="function">
    <text evidence="1">Carrier of the growing fatty acid chain in fatty acid biosynthesis.</text>
</comment>
<comment type="pathway">
    <text evidence="1">Lipid metabolism; fatty acid biosynthesis.</text>
</comment>
<comment type="subcellular location">
    <subcellularLocation>
        <location evidence="1">Cytoplasm</location>
    </subcellularLocation>
</comment>
<comment type="PTM">
    <text evidence="1">4'-phosphopantetheine is transferred from CoA to a specific serine of apo-ACP by AcpS. This modification is essential for activity because fatty acids are bound in thioester linkage to the sulfhydryl of the prosthetic group.</text>
</comment>
<comment type="similarity">
    <text evidence="1">Belongs to the acyl carrier protein (ACP) family.</text>
</comment>
<protein>
    <recommendedName>
        <fullName evidence="1">Acyl carrier protein</fullName>
        <shortName evidence="1">ACP</shortName>
    </recommendedName>
</protein>
<organism>
    <name type="scientific">Karelsulcia muelleri (strain GWSS)</name>
    <name type="common">Sulcia muelleri</name>
    <dbReference type="NCBI Taxonomy" id="444179"/>
    <lineage>
        <taxon>Bacteria</taxon>
        <taxon>Pseudomonadati</taxon>
        <taxon>Bacteroidota</taxon>
        <taxon>Flavobacteriia</taxon>
        <taxon>Flavobacteriales</taxon>
        <taxon>Candidatus Karelsulcia</taxon>
    </lineage>
</organism>
<dbReference type="EMBL" id="CP000770">
    <property type="protein sequence ID" value="ABS30448.1"/>
    <property type="molecule type" value="Genomic_DNA"/>
</dbReference>
<dbReference type="SMR" id="A8Z6C5"/>
<dbReference type="STRING" id="444179.SMGWSS_016"/>
<dbReference type="KEGG" id="smg:SMGWSS_016"/>
<dbReference type="HOGENOM" id="CLU_108696_5_1_10"/>
<dbReference type="UniPathway" id="UPA00094"/>
<dbReference type="Proteomes" id="UP000000781">
    <property type="component" value="Chromosome"/>
</dbReference>
<dbReference type="GO" id="GO:0005829">
    <property type="term" value="C:cytosol"/>
    <property type="evidence" value="ECO:0007669"/>
    <property type="project" value="TreeGrafter"/>
</dbReference>
<dbReference type="GO" id="GO:0016020">
    <property type="term" value="C:membrane"/>
    <property type="evidence" value="ECO:0007669"/>
    <property type="project" value="GOC"/>
</dbReference>
<dbReference type="GO" id="GO:0000035">
    <property type="term" value="F:acyl binding"/>
    <property type="evidence" value="ECO:0007669"/>
    <property type="project" value="TreeGrafter"/>
</dbReference>
<dbReference type="GO" id="GO:0000036">
    <property type="term" value="F:acyl carrier activity"/>
    <property type="evidence" value="ECO:0007669"/>
    <property type="project" value="UniProtKB-UniRule"/>
</dbReference>
<dbReference type="GO" id="GO:0009245">
    <property type="term" value="P:lipid A biosynthetic process"/>
    <property type="evidence" value="ECO:0007669"/>
    <property type="project" value="TreeGrafter"/>
</dbReference>
<dbReference type="Gene3D" id="1.10.1200.10">
    <property type="entry name" value="ACP-like"/>
    <property type="match status" value="1"/>
</dbReference>
<dbReference type="HAMAP" id="MF_01217">
    <property type="entry name" value="Acyl_carrier"/>
    <property type="match status" value="1"/>
</dbReference>
<dbReference type="InterPro" id="IPR003231">
    <property type="entry name" value="ACP"/>
</dbReference>
<dbReference type="InterPro" id="IPR036736">
    <property type="entry name" value="ACP-like_sf"/>
</dbReference>
<dbReference type="InterPro" id="IPR009081">
    <property type="entry name" value="PP-bd_ACP"/>
</dbReference>
<dbReference type="InterPro" id="IPR006162">
    <property type="entry name" value="Ppantetheine_attach_site"/>
</dbReference>
<dbReference type="NCBIfam" id="TIGR00517">
    <property type="entry name" value="acyl_carrier"/>
    <property type="match status" value="1"/>
</dbReference>
<dbReference type="NCBIfam" id="NF002148">
    <property type="entry name" value="PRK00982.1-2"/>
    <property type="match status" value="1"/>
</dbReference>
<dbReference type="NCBIfam" id="NF002150">
    <property type="entry name" value="PRK00982.1-4"/>
    <property type="match status" value="1"/>
</dbReference>
<dbReference type="NCBIfam" id="NF002151">
    <property type="entry name" value="PRK00982.1-5"/>
    <property type="match status" value="1"/>
</dbReference>
<dbReference type="PANTHER" id="PTHR20863">
    <property type="entry name" value="ACYL CARRIER PROTEIN"/>
    <property type="match status" value="1"/>
</dbReference>
<dbReference type="PANTHER" id="PTHR20863:SF76">
    <property type="entry name" value="CARRIER DOMAIN-CONTAINING PROTEIN"/>
    <property type="match status" value="1"/>
</dbReference>
<dbReference type="Pfam" id="PF00550">
    <property type="entry name" value="PP-binding"/>
    <property type="match status" value="1"/>
</dbReference>
<dbReference type="SUPFAM" id="SSF47336">
    <property type="entry name" value="ACP-like"/>
    <property type="match status" value="1"/>
</dbReference>
<dbReference type="PROSITE" id="PS50075">
    <property type="entry name" value="CARRIER"/>
    <property type="match status" value="1"/>
</dbReference>
<dbReference type="PROSITE" id="PS00012">
    <property type="entry name" value="PHOSPHOPANTETHEINE"/>
    <property type="match status" value="1"/>
</dbReference>
<proteinExistence type="inferred from homology"/>
<evidence type="ECO:0000255" key="1">
    <source>
        <dbReference type="HAMAP-Rule" id="MF_01217"/>
    </source>
</evidence>
<evidence type="ECO:0000255" key="2">
    <source>
        <dbReference type="PROSITE-ProRule" id="PRU00258"/>
    </source>
</evidence>
<reference key="1">
    <citation type="journal article" date="2007" name="Proc. Natl. Acad. Sci. U.S.A.">
        <title>Parallel genomic evolution and metabolic interdependence in an ancient symbiosis.</title>
        <authorList>
            <person name="McCutcheon J.P."/>
            <person name="Moran N.A."/>
        </authorList>
    </citation>
    <scope>NUCLEOTIDE SEQUENCE [LARGE SCALE GENOMIC DNA]</scope>
    <source>
        <strain>GWSS</strain>
    </source>
</reference>
<accession>A8Z6C5</accession>
<feature type="chain" id="PRO_1000085616" description="Acyl carrier protein">
    <location>
        <begin position="1"/>
        <end position="83"/>
    </location>
</feature>
<feature type="domain" description="Carrier" evidence="2">
    <location>
        <begin position="2"/>
        <end position="77"/>
    </location>
</feature>
<feature type="modified residue" description="O-(pantetheine 4'-phosphoryl)serine" evidence="2">
    <location>
        <position position="37"/>
    </location>
</feature>
<sequence length="83" mass="9497">MNEILSKIKSIIIEKLGVDEKKVIPEASFINDLGADSLDSIELIMEFEKEFDIIISDDIAEKLITVDDANQYIKKYLDDKKSF</sequence>
<name>ACP_KARMG</name>